<proteinExistence type="inferred from homology"/>
<keyword id="KW-0067">ATP-binding</keyword>
<keyword id="KW-0436">Ligase</keyword>
<keyword id="KW-0547">Nucleotide-binding</keyword>
<keyword id="KW-0658">Purine biosynthesis</keyword>
<accession>B5RCV7</accession>
<name>PUR7_SALG2</name>
<sequence length="237" mass="26908">MQKQAELYRGKAKTVYSTENPDLLVLEFRNDTSAGDGARIEQFDRKGMVNNKFNHFIMTKLAEAGIPTQMERLLSDTECLVKKLEMVPVECVVRNRAAGSLVKRLGVEEGMELNPPIFDLFLKNDALHDPMVNSSYCETFGWVSQENLARMKELTYKANDVLKKLFDDAGLILVDFKLEFGLYKGEVVLGDEFSPDGSRLWDKETLDKMDKDRFRQSLGGLIEAYEAVAHRLGVKLD</sequence>
<dbReference type="EC" id="6.3.2.6" evidence="1"/>
<dbReference type="EMBL" id="AM933173">
    <property type="protein sequence ID" value="CAR38343.1"/>
    <property type="molecule type" value="Genomic_DNA"/>
</dbReference>
<dbReference type="RefSeq" id="WP_001171630.1">
    <property type="nucleotide sequence ID" value="NC_011274.1"/>
</dbReference>
<dbReference type="SMR" id="B5RCV7"/>
<dbReference type="KEGG" id="seg:SG2517"/>
<dbReference type="HOGENOM" id="CLU_061495_2_1_6"/>
<dbReference type="UniPathway" id="UPA00074">
    <property type="reaction ID" value="UER00131"/>
</dbReference>
<dbReference type="Proteomes" id="UP000008321">
    <property type="component" value="Chromosome"/>
</dbReference>
<dbReference type="GO" id="GO:0005829">
    <property type="term" value="C:cytosol"/>
    <property type="evidence" value="ECO:0007669"/>
    <property type="project" value="TreeGrafter"/>
</dbReference>
<dbReference type="GO" id="GO:0005524">
    <property type="term" value="F:ATP binding"/>
    <property type="evidence" value="ECO:0007669"/>
    <property type="project" value="UniProtKB-KW"/>
</dbReference>
<dbReference type="GO" id="GO:0004639">
    <property type="term" value="F:phosphoribosylaminoimidazolesuccinocarboxamide synthase activity"/>
    <property type="evidence" value="ECO:0007669"/>
    <property type="project" value="UniProtKB-UniRule"/>
</dbReference>
<dbReference type="GO" id="GO:0006189">
    <property type="term" value="P:'de novo' IMP biosynthetic process"/>
    <property type="evidence" value="ECO:0007669"/>
    <property type="project" value="UniProtKB-UniRule"/>
</dbReference>
<dbReference type="GO" id="GO:0009236">
    <property type="term" value="P:cobalamin biosynthetic process"/>
    <property type="evidence" value="ECO:0007669"/>
    <property type="project" value="InterPro"/>
</dbReference>
<dbReference type="CDD" id="cd01415">
    <property type="entry name" value="SAICAR_synt_PurC"/>
    <property type="match status" value="1"/>
</dbReference>
<dbReference type="FunFam" id="3.30.200.20:FF:000086">
    <property type="entry name" value="Phosphoribosylaminoimidazole-succinocarboxamide synthase"/>
    <property type="match status" value="1"/>
</dbReference>
<dbReference type="FunFam" id="3.30.470.20:FF:000006">
    <property type="entry name" value="Phosphoribosylaminoimidazole-succinocarboxamide synthase"/>
    <property type="match status" value="1"/>
</dbReference>
<dbReference type="Gene3D" id="3.30.470.20">
    <property type="entry name" value="ATP-grasp fold, B domain"/>
    <property type="match status" value="1"/>
</dbReference>
<dbReference type="Gene3D" id="3.30.200.20">
    <property type="entry name" value="Phosphorylase Kinase, domain 1"/>
    <property type="match status" value="1"/>
</dbReference>
<dbReference type="HAMAP" id="MF_00137">
    <property type="entry name" value="SAICAR_synth"/>
    <property type="match status" value="1"/>
</dbReference>
<dbReference type="InterPro" id="IPR028923">
    <property type="entry name" value="SAICAR_synt/ADE2_N"/>
</dbReference>
<dbReference type="InterPro" id="IPR033934">
    <property type="entry name" value="SAICAR_synt_PurC"/>
</dbReference>
<dbReference type="InterPro" id="IPR001636">
    <property type="entry name" value="SAICAR_synth"/>
</dbReference>
<dbReference type="InterPro" id="IPR050089">
    <property type="entry name" value="SAICAR_synthetase"/>
</dbReference>
<dbReference type="InterPro" id="IPR018236">
    <property type="entry name" value="SAICAR_synthetase_CS"/>
</dbReference>
<dbReference type="NCBIfam" id="TIGR00081">
    <property type="entry name" value="purC"/>
    <property type="match status" value="1"/>
</dbReference>
<dbReference type="PANTHER" id="PTHR43599">
    <property type="entry name" value="MULTIFUNCTIONAL PROTEIN ADE2"/>
    <property type="match status" value="1"/>
</dbReference>
<dbReference type="PANTHER" id="PTHR43599:SF3">
    <property type="entry name" value="SI:DKEY-6E2.2"/>
    <property type="match status" value="1"/>
</dbReference>
<dbReference type="Pfam" id="PF01259">
    <property type="entry name" value="SAICAR_synt"/>
    <property type="match status" value="1"/>
</dbReference>
<dbReference type="SUPFAM" id="SSF56104">
    <property type="entry name" value="SAICAR synthase-like"/>
    <property type="match status" value="1"/>
</dbReference>
<dbReference type="PROSITE" id="PS01057">
    <property type="entry name" value="SAICAR_SYNTHETASE_1"/>
    <property type="match status" value="1"/>
</dbReference>
<dbReference type="PROSITE" id="PS01058">
    <property type="entry name" value="SAICAR_SYNTHETASE_2"/>
    <property type="match status" value="1"/>
</dbReference>
<protein>
    <recommendedName>
        <fullName evidence="1">Phosphoribosylaminoimidazole-succinocarboxamide synthase</fullName>
        <ecNumber evidence="1">6.3.2.6</ecNumber>
    </recommendedName>
    <alternativeName>
        <fullName evidence="1">SAICAR synthetase</fullName>
    </alternativeName>
</protein>
<reference key="1">
    <citation type="journal article" date="2008" name="Genome Res.">
        <title>Comparative genome analysis of Salmonella enteritidis PT4 and Salmonella gallinarum 287/91 provides insights into evolutionary and host adaptation pathways.</title>
        <authorList>
            <person name="Thomson N.R."/>
            <person name="Clayton D.J."/>
            <person name="Windhorst D."/>
            <person name="Vernikos G."/>
            <person name="Davidson S."/>
            <person name="Churcher C."/>
            <person name="Quail M.A."/>
            <person name="Stevens M."/>
            <person name="Jones M.A."/>
            <person name="Watson M."/>
            <person name="Barron A."/>
            <person name="Layton A."/>
            <person name="Pickard D."/>
            <person name="Kingsley R.A."/>
            <person name="Bignell A."/>
            <person name="Clark L."/>
            <person name="Harris B."/>
            <person name="Ormond D."/>
            <person name="Abdellah Z."/>
            <person name="Brooks K."/>
            <person name="Cherevach I."/>
            <person name="Chillingworth T."/>
            <person name="Woodward J."/>
            <person name="Norberczak H."/>
            <person name="Lord A."/>
            <person name="Arrowsmith C."/>
            <person name="Jagels K."/>
            <person name="Moule S."/>
            <person name="Mungall K."/>
            <person name="Saunders M."/>
            <person name="Whitehead S."/>
            <person name="Chabalgoity J.A."/>
            <person name="Maskell D."/>
            <person name="Humphreys T."/>
            <person name="Roberts M."/>
            <person name="Barrow P.A."/>
            <person name="Dougan G."/>
            <person name="Parkhill J."/>
        </authorList>
    </citation>
    <scope>NUCLEOTIDE SEQUENCE [LARGE SCALE GENOMIC DNA]</scope>
    <source>
        <strain>287/91 / NCTC 13346</strain>
    </source>
</reference>
<organism>
    <name type="scientific">Salmonella gallinarum (strain 287/91 / NCTC 13346)</name>
    <dbReference type="NCBI Taxonomy" id="550538"/>
    <lineage>
        <taxon>Bacteria</taxon>
        <taxon>Pseudomonadati</taxon>
        <taxon>Pseudomonadota</taxon>
        <taxon>Gammaproteobacteria</taxon>
        <taxon>Enterobacterales</taxon>
        <taxon>Enterobacteriaceae</taxon>
        <taxon>Salmonella</taxon>
    </lineage>
</organism>
<gene>
    <name evidence="1" type="primary">purC</name>
    <name type="ordered locus">SG2517</name>
</gene>
<evidence type="ECO:0000255" key="1">
    <source>
        <dbReference type="HAMAP-Rule" id="MF_00137"/>
    </source>
</evidence>
<feature type="chain" id="PRO_1000096011" description="Phosphoribosylaminoimidazole-succinocarboxamide synthase">
    <location>
        <begin position="1"/>
        <end position="237"/>
    </location>
</feature>
<comment type="catalytic activity">
    <reaction evidence="1">
        <text>5-amino-1-(5-phospho-D-ribosyl)imidazole-4-carboxylate + L-aspartate + ATP = (2S)-2-[5-amino-1-(5-phospho-beta-D-ribosyl)imidazole-4-carboxamido]succinate + ADP + phosphate + 2 H(+)</text>
        <dbReference type="Rhea" id="RHEA:22628"/>
        <dbReference type="ChEBI" id="CHEBI:15378"/>
        <dbReference type="ChEBI" id="CHEBI:29991"/>
        <dbReference type="ChEBI" id="CHEBI:30616"/>
        <dbReference type="ChEBI" id="CHEBI:43474"/>
        <dbReference type="ChEBI" id="CHEBI:58443"/>
        <dbReference type="ChEBI" id="CHEBI:77657"/>
        <dbReference type="ChEBI" id="CHEBI:456216"/>
        <dbReference type="EC" id="6.3.2.6"/>
    </reaction>
</comment>
<comment type="pathway">
    <text evidence="1">Purine metabolism; IMP biosynthesis via de novo pathway; 5-amino-1-(5-phospho-D-ribosyl)imidazole-4-carboxamide from 5-amino-1-(5-phospho-D-ribosyl)imidazole-4-carboxylate: step 1/2.</text>
</comment>
<comment type="similarity">
    <text evidence="1">Belongs to the SAICAR synthetase family.</text>
</comment>